<gene>
    <name evidence="1" type="primary">dps</name>
    <name type="ordered locus">BWG_0665</name>
</gene>
<accession>C4ZXY4</accession>
<comment type="function">
    <text evidence="1">During stationary phase, binds the chromosome non-specifically, forming a highly ordered and stable dps-DNA co-crystal within which chromosomal DNA is condensed and protected from diverse damages. It protects DNA from oxidative damage by sequestering intracellular Fe(2+) ion and storing it in the form of Fe(3+) oxyhydroxide mineral, which can be released after reduction. One hydrogen peroxide oxidizes two Fe(2+) ions, which prevents hydroxyl radical production by the Fenton reaction. Dps also protects the cell from UV and gamma irradiation, iron and copper toxicity, thermal stress and acid and base shocks. Also shows a weak catalase activity.</text>
</comment>
<comment type="catalytic activity">
    <reaction evidence="1">
        <text>2 Fe(2+) + H2O2 + 2 H(+) = 2 Fe(3+) + 2 H2O</text>
        <dbReference type="Rhea" id="RHEA:48712"/>
        <dbReference type="ChEBI" id="CHEBI:15377"/>
        <dbReference type="ChEBI" id="CHEBI:15378"/>
        <dbReference type="ChEBI" id="CHEBI:16240"/>
        <dbReference type="ChEBI" id="CHEBI:29033"/>
        <dbReference type="ChEBI" id="CHEBI:29034"/>
    </reaction>
</comment>
<comment type="subunit">
    <text evidence="1">Homododecamer. The 12 subunits form a hollow sphere into which the mineral iron core of up to 500 Fe(3+) can be deposited.</text>
</comment>
<comment type="subcellular location">
    <subcellularLocation>
        <location evidence="1">Cytoplasm</location>
        <location evidence="1">Nucleoid</location>
    </subcellularLocation>
</comment>
<comment type="similarity">
    <text evidence="1">Belongs to the Dps family.</text>
</comment>
<proteinExistence type="inferred from homology"/>
<feature type="chain" id="PRO_1000215287" description="DNA protection during starvation protein">
    <location>
        <begin position="1"/>
        <end position="167"/>
    </location>
</feature>
<feature type="binding site" evidence="1">
    <location>
        <position position="51"/>
    </location>
    <ligand>
        <name>Fe cation</name>
        <dbReference type="ChEBI" id="CHEBI:24875"/>
        <label>1</label>
        <note>ligand shared between two neighboring subunits</note>
    </ligand>
</feature>
<feature type="binding site" description="in other chain" evidence="1">
    <location>
        <position position="78"/>
    </location>
    <ligand>
        <name>Fe cation</name>
        <dbReference type="ChEBI" id="CHEBI:24875"/>
        <label>1</label>
        <note>ligand shared between two neighboring subunits</note>
    </ligand>
</feature>
<feature type="binding site" description="in other chain" evidence="1">
    <location>
        <position position="82"/>
    </location>
    <ligand>
        <name>Fe cation</name>
        <dbReference type="ChEBI" id="CHEBI:24875"/>
        <label>1</label>
        <note>ligand shared between two neighboring subunits</note>
    </ligand>
</feature>
<feature type="binding site" evidence="1">
    <location>
        <position position="82"/>
    </location>
    <ligand>
        <name>Fe cation</name>
        <dbReference type="ChEBI" id="CHEBI:24875"/>
        <label>2</label>
    </ligand>
</feature>
<protein>
    <recommendedName>
        <fullName evidence="1">DNA protection during starvation protein</fullName>
        <ecNumber evidence="1">1.16.-.-</ecNumber>
    </recommendedName>
</protein>
<dbReference type="EC" id="1.16.-.-" evidence="1"/>
<dbReference type="EMBL" id="CP001396">
    <property type="protein sequence ID" value="ACR63071.1"/>
    <property type="molecule type" value="Genomic_DNA"/>
</dbReference>
<dbReference type="RefSeq" id="WP_000100800.1">
    <property type="nucleotide sequence ID" value="NC_012759.1"/>
</dbReference>
<dbReference type="SMR" id="C4ZXY4"/>
<dbReference type="GeneID" id="93776616"/>
<dbReference type="KEGG" id="ebw:BWG_0665"/>
<dbReference type="HOGENOM" id="CLU_098183_1_2_6"/>
<dbReference type="GO" id="GO:0005737">
    <property type="term" value="C:cytoplasm"/>
    <property type="evidence" value="ECO:0007669"/>
    <property type="project" value="UniProtKB-UniRule"/>
</dbReference>
<dbReference type="GO" id="GO:0009295">
    <property type="term" value="C:nucleoid"/>
    <property type="evidence" value="ECO:0007669"/>
    <property type="project" value="UniProtKB-SubCell"/>
</dbReference>
<dbReference type="GO" id="GO:0003677">
    <property type="term" value="F:DNA binding"/>
    <property type="evidence" value="ECO:0007669"/>
    <property type="project" value="UniProtKB-UniRule"/>
</dbReference>
<dbReference type="GO" id="GO:0008199">
    <property type="term" value="F:ferric iron binding"/>
    <property type="evidence" value="ECO:0007669"/>
    <property type="project" value="UniProtKB-UniRule"/>
</dbReference>
<dbReference type="GO" id="GO:0016722">
    <property type="term" value="F:oxidoreductase activity, acting on metal ions"/>
    <property type="evidence" value="ECO:0007669"/>
    <property type="project" value="InterPro"/>
</dbReference>
<dbReference type="GO" id="GO:0030261">
    <property type="term" value="P:chromosome condensation"/>
    <property type="evidence" value="ECO:0007669"/>
    <property type="project" value="UniProtKB-KW"/>
</dbReference>
<dbReference type="GO" id="GO:0006879">
    <property type="term" value="P:intracellular iron ion homeostasis"/>
    <property type="evidence" value="ECO:0007669"/>
    <property type="project" value="UniProtKB-KW"/>
</dbReference>
<dbReference type="CDD" id="cd01043">
    <property type="entry name" value="DPS"/>
    <property type="match status" value="1"/>
</dbReference>
<dbReference type="FunFam" id="1.20.1260.10:FF:000003">
    <property type="entry name" value="DNA protection during starvation protein"/>
    <property type="match status" value="1"/>
</dbReference>
<dbReference type="Gene3D" id="1.20.1260.10">
    <property type="match status" value="1"/>
</dbReference>
<dbReference type="HAMAP" id="MF_01441">
    <property type="entry name" value="Dps"/>
    <property type="match status" value="1"/>
</dbReference>
<dbReference type="InterPro" id="IPR002177">
    <property type="entry name" value="DPS_DNA-bd"/>
</dbReference>
<dbReference type="InterPro" id="IPR023188">
    <property type="entry name" value="DPS_DNA-bd_CS"/>
</dbReference>
<dbReference type="InterPro" id="IPR023067">
    <property type="entry name" value="Dps_gammaproteobac"/>
</dbReference>
<dbReference type="InterPro" id="IPR012347">
    <property type="entry name" value="Ferritin-like"/>
</dbReference>
<dbReference type="InterPro" id="IPR009078">
    <property type="entry name" value="Ferritin-like_SF"/>
</dbReference>
<dbReference type="InterPro" id="IPR008331">
    <property type="entry name" value="Ferritin_DPS_dom"/>
</dbReference>
<dbReference type="NCBIfam" id="NF006975">
    <property type="entry name" value="PRK09448.1"/>
    <property type="match status" value="1"/>
</dbReference>
<dbReference type="PANTHER" id="PTHR42932:SF3">
    <property type="entry name" value="DNA PROTECTION DURING STARVATION PROTEIN"/>
    <property type="match status" value="1"/>
</dbReference>
<dbReference type="PANTHER" id="PTHR42932">
    <property type="entry name" value="GENERAL STRESS PROTEIN 20U"/>
    <property type="match status" value="1"/>
</dbReference>
<dbReference type="Pfam" id="PF00210">
    <property type="entry name" value="Ferritin"/>
    <property type="match status" value="1"/>
</dbReference>
<dbReference type="PIRSF" id="PIRSF005900">
    <property type="entry name" value="Dps"/>
    <property type="match status" value="1"/>
</dbReference>
<dbReference type="PRINTS" id="PR01346">
    <property type="entry name" value="HELNAPAPROT"/>
</dbReference>
<dbReference type="SUPFAM" id="SSF47240">
    <property type="entry name" value="Ferritin-like"/>
    <property type="match status" value="1"/>
</dbReference>
<dbReference type="PROSITE" id="PS00818">
    <property type="entry name" value="DPS_1"/>
    <property type="match status" value="1"/>
</dbReference>
<dbReference type="PROSITE" id="PS00819">
    <property type="entry name" value="DPS_2"/>
    <property type="match status" value="1"/>
</dbReference>
<organism>
    <name type="scientific">Escherichia coli (strain K12 / MC4100 / BW2952)</name>
    <dbReference type="NCBI Taxonomy" id="595496"/>
    <lineage>
        <taxon>Bacteria</taxon>
        <taxon>Pseudomonadati</taxon>
        <taxon>Pseudomonadota</taxon>
        <taxon>Gammaproteobacteria</taxon>
        <taxon>Enterobacterales</taxon>
        <taxon>Enterobacteriaceae</taxon>
        <taxon>Escherichia</taxon>
    </lineage>
</organism>
<sequence>MSTAKLVKSKATNLLYTRNDVSDSEKKATVELLNRQVIQFIDLSLITKQAHWNMRGANFIAVHEMLDGFRTALIDHLDTMAERAVQLGGVALGTTQVINSKTPLKSYPLDIHNVQDHLKELADRYAIVANDVRKAIGEAKDDDTADILTAASRDLDKFLWFIESNIE</sequence>
<name>DPS_ECOBW</name>
<keyword id="KW-0963">Cytoplasm</keyword>
<keyword id="KW-0226">DNA condensation</keyword>
<keyword id="KW-0238">DNA-binding</keyword>
<keyword id="KW-0408">Iron</keyword>
<keyword id="KW-0409">Iron storage</keyword>
<keyword id="KW-0479">Metal-binding</keyword>
<keyword id="KW-0560">Oxidoreductase</keyword>
<evidence type="ECO:0000255" key="1">
    <source>
        <dbReference type="HAMAP-Rule" id="MF_01441"/>
    </source>
</evidence>
<reference key="1">
    <citation type="journal article" date="2009" name="J. Bacteriol.">
        <title>Genomic sequencing reveals regulatory mutations and recombinational events in the widely used MC4100 lineage of Escherichia coli K-12.</title>
        <authorList>
            <person name="Ferenci T."/>
            <person name="Zhou Z."/>
            <person name="Betteridge T."/>
            <person name="Ren Y."/>
            <person name="Liu Y."/>
            <person name="Feng L."/>
            <person name="Reeves P.R."/>
            <person name="Wang L."/>
        </authorList>
    </citation>
    <scope>NUCLEOTIDE SEQUENCE [LARGE SCALE GENOMIC DNA]</scope>
    <source>
        <strain>K12 / MC4100 / BW2952</strain>
    </source>
</reference>